<protein>
    <recommendedName>
        <fullName evidence="1">Ribosome-recycling factor</fullName>
        <shortName evidence="1">RRF</shortName>
    </recommendedName>
    <alternativeName>
        <fullName evidence="1">Ribosome-releasing factor</fullName>
    </alternativeName>
</protein>
<name>RRF_ACIBS</name>
<keyword id="KW-0963">Cytoplasm</keyword>
<keyword id="KW-0648">Protein biosynthesis</keyword>
<evidence type="ECO:0000255" key="1">
    <source>
        <dbReference type="HAMAP-Rule" id="MF_00040"/>
    </source>
</evidence>
<reference key="1">
    <citation type="journal article" date="2008" name="PLoS ONE">
        <title>Comparative analysis of Acinetobacters: three genomes for three lifestyles.</title>
        <authorList>
            <person name="Vallenet D."/>
            <person name="Nordmann P."/>
            <person name="Barbe V."/>
            <person name="Poirel L."/>
            <person name="Mangenot S."/>
            <person name="Bataille E."/>
            <person name="Dossat C."/>
            <person name="Gas S."/>
            <person name="Kreimeyer A."/>
            <person name="Lenoble P."/>
            <person name="Oztas S."/>
            <person name="Poulain J."/>
            <person name="Segurens B."/>
            <person name="Robert C."/>
            <person name="Abergel C."/>
            <person name="Claverie J.-M."/>
            <person name="Raoult D."/>
            <person name="Medigue C."/>
            <person name="Weissenbach J."/>
            <person name="Cruveiller S."/>
        </authorList>
    </citation>
    <scope>NUCLEOTIDE SEQUENCE [LARGE SCALE GENOMIC DNA]</scope>
    <source>
        <strain>SDF</strain>
    </source>
</reference>
<comment type="function">
    <text evidence="1">Responsible for the release of ribosomes from messenger RNA at the termination of protein biosynthesis. May increase the efficiency of translation by recycling ribosomes from one round of translation to another.</text>
</comment>
<comment type="subcellular location">
    <subcellularLocation>
        <location evidence="1">Cytoplasm</location>
    </subcellularLocation>
</comment>
<comment type="similarity">
    <text evidence="1">Belongs to the RRF family.</text>
</comment>
<proteinExistence type="inferred from homology"/>
<dbReference type="EMBL" id="CU468230">
    <property type="protein sequence ID" value="CAP01021.1"/>
    <property type="molecule type" value="Genomic_DNA"/>
</dbReference>
<dbReference type="SMR" id="B0VMU5"/>
<dbReference type="KEGG" id="abm:ABSDF1681"/>
<dbReference type="HOGENOM" id="CLU_073981_2_1_6"/>
<dbReference type="Proteomes" id="UP000001741">
    <property type="component" value="Chromosome"/>
</dbReference>
<dbReference type="GO" id="GO:0005829">
    <property type="term" value="C:cytosol"/>
    <property type="evidence" value="ECO:0007669"/>
    <property type="project" value="GOC"/>
</dbReference>
<dbReference type="GO" id="GO:0043023">
    <property type="term" value="F:ribosomal large subunit binding"/>
    <property type="evidence" value="ECO:0007669"/>
    <property type="project" value="TreeGrafter"/>
</dbReference>
<dbReference type="GO" id="GO:0002184">
    <property type="term" value="P:cytoplasmic translational termination"/>
    <property type="evidence" value="ECO:0007669"/>
    <property type="project" value="TreeGrafter"/>
</dbReference>
<dbReference type="CDD" id="cd00520">
    <property type="entry name" value="RRF"/>
    <property type="match status" value="1"/>
</dbReference>
<dbReference type="FunFam" id="1.10.132.20:FF:000001">
    <property type="entry name" value="Ribosome-recycling factor"/>
    <property type="match status" value="1"/>
</dbReference>
<dbReference type="FunFam" id="3.30.1360.40:FF:000001">
    <property type="entry name" value="Ribosome-recycling factor"/>
    <property type="match status" value="1"/>
</dbReference>
<dbReference type="Gene3D" id="3.30.1360.40">
    <property type="match status" value="1"/>
</dbReference>
<dbReference type="Gene3D" id="1.10.132.20">
    <property type="entry name" value="Ribosome-recycling factor"/>
    <property type="match status" value="1"/>
</dbReference>
<dbReference type="HAMAP" id="MF_00040">
    <property type="entry name" value="RRF"/>
    <property type="match status" value="1"/>
</dbReference>
<dbReference type="InterPro" id="IPR002661">
    <property type="entry name" value="Ribosome_recyc_fac"/>
</dbReference>
<dbReference type="InterPro" id="IPR023584">
    <property type="entry name" value="Ribosome_recyc_fac_dom"/>
</dbReference>
<dbReference type="InterPro" id="IPR036191">
    <property type="entry name" value="RRF_sf"/>
</dbReference>
<dbReference type="NCBIfam" id="TIGR00496">
    <property type="entry name" value="frr"/>
    <property type="match status" value="1"/>
</dbReference>
<dbReference type="PANTHER" id="PTHR20982:SF3">
    <property type="entry name" value="MITOCHONDRIAL RIBOSOME RECYCLING FACTOR PSEUDO 1"/>
    <property type="match status" value="1"/>
</dbReference>
<dbReference type="PANTHER" id="PTHR20982">
    <property type="entry name" value="RIBOSOME RECYCLING FACTOR"/>
    <property type="match status" value="1"/>
</dbReference>
<dbReference type="Pfam" id="PF01765">
    <property type="entry name" value="RRF"/>
    <property type="match status" value="1"/>
</dbReference>
<dbReference type="SUPFAM" id="SSF55194">
    <property type="entry name" value="Ribosome recycling factor, RRF"/>
    <property type="match status" value="1"/>
</dbReference>
<sequence>MINDLKKDSEQRMLKTLESLEQGFAKVRTGRAHPSILNGVMVPYYGSDVPLNQVANVGVEDSRTLIVQPFERTMVAAIDKAIRESDLGLNPITADSIRVPLPALTEETRRDMQKIARSEAENAKVAIRNIRRDVLGDIKALLKEKEISEDDERRAGDDIQKITDKYVAEVDKRLAAKEAELMRV</sequence>
<gene>
    <name evidence="1" type="primary">frr</name>
    <name type="ordered locus">ABSDF1681</name>
</gene>
<accession>B0VMU5</accession>
<feature type="chain" id="PRO_1000090697" description="Ribosome-recycling factor">
    <location>
        <begin position="1"/>
        <end position="184"/>
    </location>
</feature>
<organism>
    <name type="scientific">Acinetobacter baumannii (strain SDF)</name>
    <dbReference type="NCBI Taxonomy" id="509170"/>
    <lineage>
        <taxon>Bacteria</taxon>
        <taxon>Pseudomonadati</taxon>
        <taxon>Pseudomonadota</taxon>
        <taxon>Gammaproteobacteria</taxon>
        <taxon>Moraxellales</taxon>
        <taxon>Moraxellaceae</taxon>
        <taxon>Acinetobacter</taxon>
        <taxon>Acinetobacter calcoaceticus/baumannii complex</taxon>
    </lineage>
</organism>